<evidence type="ECO:0000255" key="1">
    <source>
        <dbReference type="HAMAP-Rule" id="MF_00421"/>
    </source>
</evidence>
<proteinExistence type="inferred from homology"/>
<gene>
    <name evidence="1" type="primary">purQ</name>
    <name type="ordered locus">BT9727_0265</name>
</gene>
<keyword id="KW-0067">ATP-binding</keyword>
<keyword id="KW-0963">Cytoplasm</keyword>
<keyword id="KW-0315">Glutamine amidotransferase</keyword>
<keyword id="KW-0378">Hydrolase</keyword>
<keyword id="KW-0436">Ligase</keyword>
<keyword id="KW-0547">Nucleotide-binding</keyword>
<keyword id="KW-0658">Purine biosynthesis</keyword>
<comment type="function">
    <text evidence="1">Part of the phosphoribosylformylglycinamidine synthase complex involved in the purines biosynthetic pathway. Catalyzes the ATP-dependent conversion of formylglycinamide ribonucleotide (FGAR) and glutamine to yield formylglycinamidine ribonucleotide (FGAM) and glutamate. The FGAM synthase complex is composed of three subunits. PurQ produces an ammonia molecule by converting glutamine to glutamate. PurL transfers the ammonia molecule to FGAR to form FGAM in an ATP-dependent manner. PurS interacts with PurQ and PurL and is thought to assist in the transfer of the ammonia molecule from PurQ to PurL.</text>
</comment>
<comment type="catalytic activity">
    <reaction evidence="1">
        <text>N(2)-formyl-N(1)-(5-phospho-beta-D-ribosyl)glycinamide + L-glutamine + ATP + H2O = 2-formamido-N(1)-(5-O-phospho-beta-D-ribosyl)acetamidine + L-glutamate + ADP + phosphate + H(+)</text>
        <dbReference type="Rhea" id="RHEA:17129"/>
        <dbReference type="ChEBI" id="CHEBI:15377"/>
        <dbReference type="ChEBI" id="CHEBI:15378"/>
        <dbReference type="ChEBI" id="CHEBI:29985"/>
        <dbReference type="ChEBI" id="CHEBI:30616"/>
        <dbReference type="ChEBI" id="CHEBI:43474"/>
        <dbReference type="ChEBI" id="CHEBI:58359"/>
        <dbReference type="ChEBI" id="CHEBI:147286"/>
        <dbReference type="ChEBI" id="CHEBI:147287"/>
        <dbReference type="ChEBI" id="CHEBI:456216"/>
        <dbReference type="EC" id="6.3.5.3"/>
    </reaction>
</comment>
<comment type="catalytic activity">
    <reaction evidence="1">
        <text>L-glutamine + H2O = L-glutamate + NH4(+)</text>
        <dbReference type="Rhea" id="RHEA:15889"/>
        <dbReference type="ChEBI" id="CHEBI:15377"/>
        <dbReference type="ChEBI" id="CHEBI:28938"/>
        <dbReference type="ChEBI" id="CHEBI:29985"/>
        <dbReference type="ChEBI" id="CHEBI:58359"/>
        <dbReference type="EC" id="3.5.1.2"/>
    </reaction>
</comment>
<comment type="pathway">
    <text evidence="1">Purine metabolism; IMP biosynthesis via de novo pathway; 5-amino-1-(5-phospho-D-ribosyl)imidazole from N(2)-formyl-N(1)-(5-phospho-D-ribosyl)glycinamide: step 1/2.</text>
</comment>
<comment type="subunit">
    <text evidence="1">Part of the FGAM synthase complex composed of 1 PurL, 1 PurQ and 2 PurS subunits.</text>
</comment>
<comment type="subcellular location">
    <subcellularLocation>
        <location evidence="1">Cytoplasm</location>
    </subcellularLocation>
</comment>
<accession>Q6HPA5</accession>
<organism>
    <name type="scientific">Bacillus thuringiensis subsp. konkukian (strain 97-27)</name>
    <dbReference type="NCBI Taxonomy" id="281309"/>
    <lineage>
        <taxon>Bacteria</taxon>
        <taxon>Bacillati</taxon>
        <taxon>Bacillota</taxon>
        <taxon>Bacilli</taxon>
        <taxon>Bacillales</taxon>
        <taxon>Bacillaceae</taxon>
        <taxon>Bacillus</taxon>
        <taxon>Bacillus cereus group</taxon>
    </lineage>
</organism>
<feature type="chain" id="PRO_0000100536" description="Phosphoribosylformylglycinamidine synthase subunit PurQ">
    <location>
        <begin position="1"/>
        <end position="227"/>
    </location>
</feature>
<feature type="domain" description="Glutamine amidotransferase type-1" evidence="1">
    <location>
        <begin position="3"/>
        <end position="225"/>
    </location>
</feature>
<feature type="active site" description="Nucleophile" evidence="1">
    <location>
        <position position="86"/>
    </location>
</feature>
<feature type="active site" evidence="1">
    <location>
        <position position="194"/>
    </location>
</feature>
<feature type="active site" evidence="1">
    <location>
        <position position="196"/>
    </location>
</feature>
<dbReference type="EC" id="6.3.5.3" evidence="1"/>
<dbReference type="EC" id="3.5.1.2" evidence="1"/>
<dbReference type="EMBL" id="AE017355">
    <property type="protein sequence ID" value="AAT58976.1"/>
    <property type="molecule type" value="Genomic_DNA"/>
</dbReference>
<dbReference type="RefSeq" id="WP_000666779.1">
    <property type="nucleotide sequence ID" value="NC_005957.1"/>
</dbReference>
<dbReference type="RefSeq" id="YP_034615.1">
    <property type="nucleotide sequence ID" value="NC_005957.1"/>
</dbReference>
<dbReference type="SMR" id="Q6HPA5"/>
<dbReference type="GeneID" id="69534103"/>
<dbReference type="KEGG" id="btk:BT9727_0265"/>
<dbReference type="PATRIC" id="fig|281309.8.peg.282"/>
<dbReference type="HOGENOM" id="CLU_001031_3_1_9"/>
<dbReference type="UniPathway" id="UPA00074">
    <property type="reaction ID" value="UER00128"/>
</dbReference>
<dbReference type="Proteomes" id="UP000001301">
    <property type="component" value="Chromosome"/>
</dbReference>
<dbReference type="GO" id="GO:0005737">
    <property type="term" value="C:cytoplasm"/>
    <property type="evidence" value="ECO:0007669"/>
    <property type="project" value="UniProtKB-SubCell"/>
</dbReference>
<dbReference type="GO" id="GO:0005524">
    <property type="term" value="F:ATP binding"/>
    <property type="evidence" value="ECO:0007669"/>
    <property type="project" value="UniProtKB-KW"/>
</dbReference>
<dbReference type="GO" id="GO:0004359">
    <property type="term" value="F:glutaminase activity"/>
    <property type="evidence" value="ECO:0007669"/>
    <property type="project" value="UniProtKB-EC"/>
</dbReference>
<dbReference type="GO" id="GO:0004642">
    <property type="term" value="F:phosphoribosylformylglycinamidine synthase activity"/>
    <property type="evidence" value="ECO:0007669"/>
    <property type="project" value="UniProtKB-UniRule"/>
</dbReference>
<dbReference type="GO" id="GO:0006189">
    <property type="term" value="P:'de novo' IMP biosynthetic process"/>
    <property type="evidence" value="ECO:0007669"/>
    <property type="project" value="UniProtKB-UniRule"/>
</dbReference>
<dbReference type="CDD" id="cd01740">
    <property type="entry name" value="GATase1_FGAR_AT"/>
    <property type="match status" value="1"/>
</dbReference>
<dbReference type="FunFam" id="3.40.50.880:FF:000019">
    <property type="entry name" value="Phosphoribosylformylglycinamidine synthase subunit PurQ"/>
    <property type="match status" value="1"/>
</dbReference>
<dbReference type="Gene3D" id="3.40.50.880">
    <property type="match status" value="1"/>
</dbReference>
<dbReference type="HAMAP" id="MF_00421">
    <property type="entry name" value="PurQ"/>
    <property type="match status" value="1"/>
</dbReference>
<dbReference type="InterPro" id="IPR029062">
    <property type="entry name" value="Class_I_gatase-like"/>
</dbReference>
<dbReference type="InterPro" id="IPR010075">
    <property type="entry name" value="PRibForGlyAmidine_synth_PurQ"/>
</dbReference>
<dbReference type="NCBIfam" id="TIGR01737">
    <property type="entry name" value="FGAM_synth_I"/>
    <property type="match status" value="1"/>
</dbReference>
<dbReference type="NCBIfam" id="NF002957">
    <property type="entry name" value="PRK03619.1"/>
    <property type="match status" value="1"/>
</dbReference>
<dbReference type="PANTHER" id="PTHR47552">
    <property type="entry name" value="PHOSPHORIBOSYLFORMYLGLYCINAMIDINE SYNTHASE SUBUNIT PURQ"/>
    <property type="match status" value="1"/>
</dbReference>
<dbReference type="PANTHER" id="PTHR47552:SF1">
    <property type="entry name" value="PHOSPHORIBOSYLFORMYLGLYCINAMIDINE SYNTHASE SUBUNIT PURQ"/>
    <property type="match status" value="1"/>
</dbReference>
<dbReference type="Pfam" id="PF13507">
    <property type="entry name" value="GATase_5"/>
    <property type="match status" value="1"/>
</dbReference>
<dbReference type="PIRSF" id="PIRSF001586">
    <property type="entry name" value="FGAM_synth_I"/>
    <property type="match status" value="1"/>
</dbReference>
<dbReference type="SMART" id="SM01211">
    <property type="entry name" value="GATase_5"/>
    <property type="match status" value="1"/>
</dbReference>
<dbReference type="SUPFAM" id="SSF52317">
    <property type="entry name" value="Class I glutamine amidotransferase-like"/>
    <property type="match status" value="1"/>
</dbReference>
<dbReference type="PROSITE" id="PS51273">
    <property type="entry name" value="GATASE_TYPE_1"/>
    <property type="match status" value="1"/>
</dbReference>
<sequence length="227" mass="25411">MKFAVIVFPGSNCDVDMFHAIKDELGEEVDYVWHDTENLDEYDAILLPGGFSYGDYLRCGAISRFANAMKAVQKAAEQGKPILGVCNGFQILVESGLLPGALMRNENLKFMCRTVQLRVENNETMFTSQYEKDEVINIPIAHGEGNYYCDEETLKQLEENNQIAFRYVENPNGSVSDIAGIVNEKGNVLGMMPHPERAVDELLGGAEGLKVFQSILKQWRETYVVNA</sequence>
<name>PURQ_BACHK</name>
<reference key="1">
    <citation type="journal article" date="2006" name="J. Bacteriol.">
        <title>Pathogenomic sequence analysis of Bacillus cereus and Bacillus thuringiensis isolates closely related to Bacillus anthracis.</title>
        <authorList>
            <person name="Han C.S."/>
            <person name="Xie G."/>
            <person name="Challacombe J.F."/>
            <person name="Altherr M.R."/>
            <person name="Bhotika S.S."/>
            <person name="Bruce D."/>
            <person name="Campbell C.S."/>
            <person name="Campbell M.L."/>
            <person name="Chen J."/>
            <person name="Chertkov O."/>
            <person name="Cleland C."/>
            <person name="Dimitrijevic M."/>
            <person name="Doggett N.A."/>
            <person name="Fawcett J.J."/>
            <person name="Glavina T."/>
            <person name="Goodwin L.A."/>
            <person name="Hill K.K."/>
            <person name="Hitchcock P."/>
            <person name="Jackson P.J."/>
            <person name="Keim P."/>
            <person name="Kewalramani A.R."/>
            <person name="Longmire J."/>
            <person name="Lucas S."/>
            <person name="Malfatti S."/>
            <person name="McMurry K."/>
            <person name="Meincke L.J."/>
            <person name="Misra M."/>
            <person name="Moseman B.L."/>
            <person name="Mundt M."/>
            <person name="Munk A.C."/>
            <person name="Okinaka R.T."/>
            <person name="Parson-Quintana B."/>
            <person name="Reilly L.P."/>
            <person name="Richardson P."/>
            <person name="Robinson D.L."/>
            <person name="Rubin E."/>
            <person name="Saunders E."/>
            <person name="Tapia R."/>
            <person name="Tesmer J.G."/>
            <person name="Thayer N."/>
            <person name="Thompson L.S."/>
            <person name="Tice H."/>
            <person name="Ticknor L.O."/>
            <person name="Wills P.L."/>
            <person name="Brettin T.S."/>
            <person name="Gilna P."/>
        </authorList>
    </citation>
    <scope>NUCLEOTIDE SEQUENCE [LARGE SCALE GENOMIC DNA]</scope>
    <source>
        <strain>97-27</strain>
    </source>
</reference>
<protein>
    <recommendedName>
        <fullName evidence="1">Phosphoribosylformylglycinamidine synthase subunit PurQ</fullName>
        <shortName evidence="1">FGAM synthase</shortName>
        <ecNumber evidence="1">6.3.5.3</ecNumber>
    </recommendedName>
    <alternativeName>
        <fullName evidence="1">Formylglycinamide ribonucleotide amidotransferase subunit I</fullName>
        <shortName evidence="1">FGAR amidotransferase I</shortName>
        <shortName evidence="1">FGAR-AT I</shortName>
    </alternativeName>
    <alternativeName>
        <fullName evidence="1">Glutaminase PurQ</fullName>
        <ecNumber evidence="1">3.5.1.2</ecNumber>
    </alternativeName>
    <alternativeName>
        <fullName evidence="1">Phosphoribosylformylglycinamidine synthase subunit I</fullName>
    </alternativeName>
</protein>